<keyword id="KW-0067">ATP-binding</keyword>
<keyword id="KW-0418">Kinase</keyword>
<keyword id="KW-0464">Manganese</keyword>
<keyword id="KW-0547">Nucleotide-binding</keyword>
<keyword id="KW-1185">Reference proteome</keyword>
<keyword id="KW-0723">Serine/threonine-protein kinase</keyword>
<keyword id="KW-0808">Transferase</keyword>
<evidence type="ECO:0000250" key="1"/>
<evidence type="ECO:0000255" key="2">
    <source>
        <dbReference type="PROSITE-ProRule" id="PRU00159"/>
    </source>
</evidence>
<evidence type="ECO:0000255" key="3">
    <source>
        <dbReference type="PROSITE-ProRule" id="PRU00256"/>
    </source>
</evidence>
<evidence type="ECO:0000255" key="4">
    <source>
        <dbReference type="PROSITE-ProRule" id="PRU10027"/>
    </source>
</evidence>
<evidence type="ECO:0000305" key="5"/>
<feature type="chain" id="PRO_0000338389" description="CBL-interacting protein kinase 32">
    <location>
        <begin position="1"/>
        <end position="438"/>
    </location>
</feature>
<feature type="domain" description="Protein kinase" evidence="2">
    <location>
        <begin position="13"/>
        <end position="268"/>
    </location>
</feature>
<feature type="domain" description="NAF" evidence="3">
    <location>
        <begin position="305"/>
        <end position="329"/>
    </location>
</feature>
<feature type="region of interest" description="Activation loop" evidence="1">
    <location>
        <begin position="154"/>
        <end position="183"/>
    </location>
</feature>
<feature type="region of interest" description="PPI" evidence="1">
    <location>
        <begin position="335"/>
        <end position="364"/>
    </location>
</feature>
<feature type="active site" description="Proton acceptor" evidence="2 4">
    <location>
        <position position="136"/>
    </location>
</feature>
<feature type="binding site" evidence="2">
    <location>
        <begin position="19"/>
        <end position="27"/>
    </location>
    <ligand>
        <name>ATP</name>
        <dbReference type="ChEBI" id="CHEBI:30616"/>
    </ligand>
</feature>
<feature type="binding site" evidence="2">
    <location>
        <position position="42"/>
    </location>
    <ligand>
        <name>ATP</name>
        <dbReference type="ChEBI" id="CHEBI:30616"/>
    </ligand>
</feature>
<protein>
    <recommendedName>
        <fullName>CBL-interacting protein kinase 32</fullName>
        <ecNumber>2.7.11.1</ecNumber>
    </recommendedName>
    <alternativeName>
        <fullName>OsCIPK32</fullName>
    </alternativeName>
</protein>
<name>CIPKW_ORYSJ</name>
<proteinExistence type="evidence at transcript level"/>
<dbReference type="EC" id="2.7.11.1"/>
<dbReference type="EMBL" id="DP000011">
    <property type="protein sequence ID" value="ABA95716.2"/>
    <property type="molecule type" value="Genomic_DNA"/>
</dbReference>
<dbReference type="EMBL" id="AP008218">
    <property type="protein sequence ID" value="BAF29098.1"/>
    <property type="molecule type" value="Genomic_DNA"/>
</dbReference>
<dbReference type="EMBL" id="AP014968">
    <property type="status" value="NOT_ANNOTATED_CDS"/>
    <property type="molecule type" value="Genomic_DNA"/>
</dbReference>
<dbReference type="EMBL" id="AK111675">
    <property type="status" value="NOT_ANNOTATED_CDS"/>
    <property type="molecule type" value="mRNA"/>
</dbReference>
<dbReference type="RefSeq" id="XP_015619859.1">
    <property type="nucleotide sequence ID" value="XM_015764373.1"/>
</dbReference>
<dbReference type="RefSeq" id="XP_015619860.1">
    <property type="nucleotide sequence ID" value="XM_015764374.1"/>
</dbReference>
<dbReference type="SMR" id="Q2QY53"/>
<dbReference type="FunCoup" id="Q2QY53">
    <property type="interactions" value="554"/>
</dbReference>
<dbReference type="STRING" id="39947.Q2QY53"/>
<dbReference type="PaxDb" id="39947-Q2QY53"/>
<dbReference type="GeneID" id="4351419"/>
<dbReference type="KEGG" id="dosa:Os12g0132200"/>
<dbReference type="KEGG" id="osa:4351419"/>
<dbReference type="HOGENOM" id="CLU_000288_59_0_1"/>
<dbReference type="InParanoid" id="Q2QY53"/>
<dbReference type="OrthoDB" id="193931at2759"/>
<dbReference type="Proteomes" id="UP000000763">
    <property type="component" value="Chromosome 12"/>
</dbReference>
<dbReference type="Proteomes" id="UP000059680">
    <property type="component" value="Chromosome 12"/>
</dbReference>
<dbReference type="GO" id="GO:0005524">
    <property type="term" value="F:ATP binding"/>
    <property type="evidence" value="ECO:0007669"/>
    <property type="project" value="UniProtKB-KW"/>
</dbReference>
<dbReference type="GO" id="GO:0106310">
    <property type="term" value="F:protein serine kinase activity"/>
    <property type="evidence" value="ECO:0007669"/>
    <property type="project" value="RHEA"/>
</dbReference>
<dbReference type="GO" id="GO:0004674">
    <property type="term" value="F:protein serine/threonine kinase activity"/>
    <property type="evidence" value="ECO:0000318"/>
    <property type="project" value="GO_Central"/>
</dbReference>
<dbReference type="GO" id="GO:0007165">
    <property type="term" value="P:signal transduction"/>
    <property type="evidence" value="ECO:0007669"/>
    <property type="project" value="InterPro"/>
</dbReference>
<dbReference type="CDD" id="cd12195">
    <property type="entry name" value="CIPK_C"/>
    <property type="match status" value="1"/>
</dbReference>
<dbReference type="CDD" id="cd14663">
    <property type="entry name" value="STKc_SnRK3"/>
    <property type="match status" value="1"/>
</dbReference>
<dbReference type="FunFam" id="1.10.510.10:FF:000279">
    <property type="entry name" value="Non-specific serine/threonine protein kinase"/>
    <property type="match status" value="1"/>
</dbReference>
<dbReference type="FunFam" id="3.30.200.20:FF:000096">
    <property type="entry name" value="Non-specific serine/threonine protein kinase"/>
    <property type="match status" value="1"/>
</dbReference>
<dbReference type="FunFam" id="3.30.310.80:FF:000002">
    <property type="entry name" value="Non-specific serine/threonine protein kinase"/>
    <property type="match status" value="1"/>
</dbReference>
<dbReference type="Gene3D" id="3.30.310.80">
    <property type="entry name" value="Kinase associated domain 1, KA1"/>
    <property type="match status" value="1"/>
</dbReference>
<dbReference type="Gene3D" id="3.30.200.20">
    <property type="entry name" value="Phosphorylase Kinase, domain 1"/>
    <property type="match status" value="1"/>
</dbReference>
<dbReference type="Gene3D" id="1.10.510.10">
    <property type="entry name" value="Transferase(Phosphotransferase) domain 1"/>
    <property type="match status" value="1"/>
</dbReference>
<dbReference type="InterPro" id="IPR028375">
    <property type="entry name" value="KA1/Ssp2_C"/>
</dbReference>
<dbReference type="InterPro" id="IPR011009">
    <property type="entry name" value="Kinase-like_dom_sf"/>
</dbReference>
<dbReference type="InterPro" id="IPR018451">
    <property type="entry name" value="NAF/FISL_domain"/>
</dbReference>
<dbReference type="InterPro" id="IPR004041">
    <property type="entry name" value="NAF_dom"/>
</dbReference>
<dbReference type="InterPro" id="IPR000719">
    <property type="entry name" value="Prot_kinase_dom"/>
</dbReference>
<dbReference type="InterPro" id="IPR017441">
    <property type="entry name" value="Protein_kinase_ATP_BS"/>
</dbReference>
<dbReference type="InterPro" id="IPR008271">
    <property type="entry name" value="Ser/Thr_kinase_AS"/>
</dbReference>
<dbReference type="PANTHER" id="PTHR43895">
    <property type="entry name" value="CALCIUM/CALMODULIN-DEPENDENT PROTEIN KINASE KINASE-RELATED"/>
    <property type="match status" value="1"/>
</dbReference>
<dbReference type="PANTHER" id="PTHR43895:SF104">
    <property type="entry name" value="CBL-INTERACTING SERINE_THREONINE-PROTEIN KINASE 3"/>
    <property type="match status" value="1"/>
</dbReference>
<dbReference type="Pfam" id="PF03822">
    <property type="entry name" value="NAF"/>
    <property type="match status" value="1"/>
</dbReference>
<dbReference type="Pfam" id="PF00069">
    <property type="entry name" value="Pkinase"/>
    <property type="match status" value="1"/>
</dbReference>
<dbReference type="SMART" id="SM00220">
    <property type="entry name" value="S_TKc"/>
    <property type="match status" value="1"/>
</dbReference>
<dbReference type="SUPFAM" id="SSF103243">
    <property type="entry name" value="KA1-like"/>
    <property type="match status" value="1"/>
</dbReference>
<dbReference type="SUPFAM" id="SSF56112">
    <property type="entry name" value="Protein kinase-like (PK-like)"/>
    <property type="match status" value="1"/>
</dbReference>
<dbReference type="PROSITE" id="PS50816">
    <property type="entry name" value="NAF"/>
    <property type="match status" value="1"/>
</dbReference>
<dbReference type="PROSITE" id="PS00107">
    <property type="entry name" value="PROTEIN_KINASE_ATP"/>
    <property type="match status" value="1"/>
</dbReference>
<dbReference type="PROSITE" id="PS50011">
    <property type="entry name" value="PROTEIN_KINASE_DOM"/>
    <property type="match status" value="1"/>
</dbReference>
<dbReference type="PROSITE" id="PS00108">
    <property type="entry name" value="PROTEIN_KINASE_ST"/>
    <property type="match status" value="1"/>
</dbReference>
<gene>
    <name type="primary">CIPK32</name>
    <name type="ordered locus">Os12g0132200</name>
    <name type="ordered locus">LOC_Os12g03810</name>
</gene>
<accession>Q2QY53</accession>
<sequence length="438" mass="50338">MSTTKVKRRVGKYELGRTIGEGTFAKVKFARDTETGDPVAIKILDKEKVLKHKMVEQIKREISTMKLIKHPNVVRIYEVMGSKTKIYIVLEYVTGGELFDTIVNHGRMREDEARRYFQQLINAVDYCHSRGVYHRDLKPENLLLDSYGNLKVSDFGLSALSQQIKDDGLLHTTCGTPNYVAPEVLEDQGYDGAMADLWSCGVILFVLLAGYLPFEDSNLMTLYKKISNAEFTFPPWTSFPAKRLLTRILDPNPMTRVTIPEILEDEWFKKGYKRPEFDEKYDTTLDDVYAVFNDSEEHHVTEKKEEPEALNAFELISMSAGLNLGNLFDSEQEFKRETRFTSKCPPKEIVRKIEEAAKPLGFDVQKKNYKLRLEKVKAGRKGNLNVATEILQVAPSLHMVEVRKAKGDTLEFHKFYKNLSRTLKDVVWKSDDLQNQLS</sequence>
<comment type="function">
    <text evidence="1">CIPK serine-threonine protein kinases interact with CBL proteins. Binding of a CBL protein to the regulatory NAF domain of CIPK protein lead to the activation of the kinase in a calcium-dependent manner (By similarity).</text>
</comment>
<comment type="catalytic activity">
    <reaction>
        <text>L-seryl-[protein] + ATP = O-phospho-L-seryl-[protein] + ADP + H(+)</text>
        <dbReference type="Rhea" id="RHEA:17989"/>
        <dbReference type="Rhea" id="RHEA-COMP:9863"/>
        <dbReference type="Rhea" id="RHEA-COMP:11604"/>
        <dbReference type="ChEBI" id="CHEBI:15378"/>
        <dbReference type="ChEBI" id="CHEBI:29999"/>
        <dbReference type="ChEBI" id="CHEBI:30616"/>
        <dbReference type="ChEBI" id="CHEBI:83421"/>
        <dbReference type="ChEBI" id="CHEBI:456216"/>
        <dbReference type="EC" id="2.7.11.1"/>
    </reaction>
</comment>
<comment type="catalytic activity">
    <reaction>
        <text>L-threonyl-[protein] + ATP = O-phospho-L-threonyl-[protein] + ADP + H(+)</text>
        <dbReference type="Rhea" id="RHEA:46608"/>
        <dbReference type="Rhea" id="RHEA-COMP:11060"/>
        <dbReference type="Rhea" id="RHEA-COMP:11605"/>
        <dbReference type="ChEBI" id="CHEBI:15378"/>
        <dbReference type="ChEBI" id="CHEBI:30013"/>
        <dbReference type="ChEBI" id="CHEBI:30616"/>
        <dbReference type="ChEBI" id="CHEBI:61977"/>
        <dbReference type="ChEBI" id="CHEBI:456216"/>
        <dbReference type="EC" id="2.7.11.1"/>
    </reaction>
</comment>
<comment type="cofactor">
    <cofactor evidence="1">
        <name>Mn(2+)</name>
        <dbReference type="ChEBI" id="CHEBI:29035"/>
    </cofactor>
</comment>
<comment type="domain">
    <text evidence="1">The activation loop within the kinase domain is the target of phosphorylation/activation by upstream protein kinases. The PPI motif mediates the interaction with the ABI (abscisic acid-insensitive) phosphatases (By similarity).</text>
</comment>
<comment type="similarity">
    <text evidence="5">Belongs to the protein kinase superfamily. CAMK Ser/Thr protein kinase family. SNF1 subfamily.</text>
</comment>
<comment type="sequence caution" evidence="5">
    <conflict type="frameshift">
        <sequence resource="EMBL" id="AK111675"/>
    </conflict>
</comment>
<organism>
    <name type="scientific">Oryza sativa subsp. japonica</name>
    <name type="common">Rice</name>
    <dbReference type="NCBI Taxonomy" id="39947"/>
    <lineage>
        <taxon>Eukaryota</taxon>
        <taxon>Viridiplantae</taxon>
        <taxon>Streptophyta</taxon>
        <taxon>Embryophyta</taxon>
        <taxon>Tracheophyta</taxon>
        <taxon>Spermatophyta</taxon>
        <taxon>Magnoliopsida</taxon>
        <taxon>Liliopsida</taxon>
        <taxon>Poales</taxon>
        <taxon>Poaceae</taxon>
        <taxon>BOP clade</taxon>
        <taxon>Oryzoideae</taxon>
        <taxon>Oryzeae</taxon>
        <taxon>Oryzinae</taxon>
        <taxon>Oryza</taxon>
        <taxon>Oryza sativa</taxon>
    </lineage>
</organism>
<reference key="1">
    <citation type="journal article" date="2005" name="BMC Biol.">
        <title>The sequence of rice chromosomes 11 and 12, rich in disease resistance genes and recent gene duplications.</title>
        <authorList>
            <consortium name="The rice chromosomes 11 and 12 sequencing consortia"/>
        </authorList>
    </citation>
    <scope>NUCLEOTIDE SEQUENCE [LARGE SCALE GENOMIC DNA]</scope>
    <source>
        <strain>cv. Nipponbare</strain>
    </source>
</reference>
<reference key="2">
    <citation type="journal article" date="2005" name="Nature">
        <title>The map-based sequence of the rice genome.</title>
        <authorList>
            <consortium name="International rice genome sequencing project (IRGSP)"/>
        </authorList>
    </citation>
    <scope>NUCLEOTIDE SEQUENCE [LARGE SCALE GENOMIC DNA]</scope>
    <source>
        <strain>cv. Nipponbare</strain>
    </source>
</reference>
<reference key="3">
    <citation type="journal article" date="2008" name="Nucleic Acids Res.">
        <title>The rice annotation project database (RAP-DB): 2008 update.</title>
        <authorList>
            <consortium name="The rice annotation project (RAP)"/>
        </authorList>
    </citation>
    <scope>GENOME REANNOTATION</scope>
    <source>
        <strain>cv. Nipponbare</strain>
    </source>
</reference>
<reference key="4">
    <citation type="journal article" date="2013" name="Rice">
        <title>Improvement of the Oryza sativa Nipponbare reference genome using next generation sequence and optical map data.</title>
        <authorList>
            <person name="Kawahara Y."/>
            <person name="de la Bastide M."/>
            <person name="Hamilton J.P."/>
            <person name="Kanamori H."/>
            <person name="McCombie W.R."/>
            <person name="Ouyang S."/>
            <person name="Schwartz D.C."/>
            <person name="Tanaka T."/>
            <person name="Wu J."/>
            <person name="Zhou S."/>
            <person name="Childs K.L."/>
            <person name="Davidson R.M."/>
            <person name="Lin H."/>
            <person name="Quesada-Ocampo L."/>
            <person name="Vaillancourt B."/>
            <person name="Sakai H."/>
            <person name="Lee S.S."/>
            <person name="Kim J."/>
            <person name="Numa H."/>
            <person name="Itoh T."/>
            <person name="Buell C.R."/>
            <person name="Matsumoto T."/>
        </authorList>
    </citation>
    <scope>GENOME REANNOTATION</scope>
    <source>
        <strain>cv. Nipponbare</strain>
    </source>
</reference>
<reference key="5">
    <citation type="journal article" date="2003" name="Science">
        <title>Collection, mapping, and annotation of over 28,000 cDNA clones from japonica rice.</title>
        <authorList>
            <consortium name="The rice full-length cDNA consortium"/>
        </authorList>
    </citation>
    <scope>NUCLEOTIDE SEQUENCE [LARGE SCALE MRNA]</scope>
    <source>
        <strain>cv. Nipponbare</strain>
    </source>
</reference>
<reference key="6">
    <citation type="journal article" date="2004" name="Plant Physiol.">
        <title>Calcium sensors and their interacting protein kinases: genomics of the Arabidopsis and rice CBL-CIPK signaling networks.</title>
        <authorList>
            <person name="Kolukisaoglu U."/>
            <person name="Weinl S."/>
            <person name="Blazevic D."/>
            <person name="Batistic O."/>
            <person name="Kudla J."/>
        </authorList>
    </citation>
    <scope>GENE FAMILY</scope>
    <scope>NOMENCLATURE</scope>
</reference>